<sequence>MTGRGKGGKGLGKGGAKRHRKVLRDNIQGITKPAIRRLARRGGVKRISGLIYEETRGVLKVFWQNVIRDAVTYTEHAKRKTVTAMDVVYALKRQGRTLYGFGG</sequence>
<keyword id="KW-0007">Acetylation</keyword>
<keyword id="KW-0158">Chromosome</keyword>
<keyword id="KW-0238">DNA-binding</keyword>
<keyword id="KW-0488">Methylation</keyword>
<keyword id="KW-0544">Nucleosome core</keyword>
<keyword id="KW-0539">Nucleus</keyword>
<dbReference type="EMBL" id="X91510">
    <property type="protein sequence ID" value="CAA62810.1"/>
    <property type="molecule type" value="mRNA"/>
</dbReference>
<dbReference type="SMR" id="P91882"/>
<dbReference type="GO" id="GO:0000786">
    <property type="term" value="C:nucleosome"/>
    <property type="evidence" value="ECO:0007669"/>
    <property type="project" value="UniProtKB-KW"/>
</dbReference>
<dbReference type="GO" id="GO:0005634">
    <property type="term" value="C:nucleus"/>
    <property type="evidence" value="ECO:0007669"/>
    <property type="project" value="UniProtKB-SubCell"/>
</dbReference>
<dbReference type="GO" id="GO:0003677">
    <property type="term" value="F:DNA binding"/>
    <property type="evidence" value="ECO:0007669"/>
    <property type="project" value="UniProtKB-KW"/>
</dbReference>
<dbReference type="GO" id="GO:0046982">
    <property type="term" value="F:protein heterodimerization activity"/>
    <property type="evidence" value="ECO:0007669"/>
    <property type="project" value="InterPro"/>
</dbReference>
<dbReference type="GO" id="GO:0030527">
    <property type="term" value="F:structural constituent of chromatin"/>
    <property type="evidence" value="ECO:0007669"/>
    <property type="project" value="InterPro"/>
</dbReference>
<dbReference type="CDD" id="cd22912">
    <property type="entry name" value="HFD_H4"/>
    <property type="match status" value="1"/>
</dbReference>
<dbReference type="FunFam" id="1.10.20.10:FF:000002">
    <property type="entry name" value="Histone H4"/>
    <property type="match status" value="1"/>
</dbReference>
<dbReference type="Gene3D" id="1.10.20.10">
    <property type="entry name" value="Histone, subunit A"/>
    <property type="match status" value="1"/>
</dbReference>
<dbReference type="InterPro" id="IPR035425">
    <property type="entry name" value="CENP-T/H4_C"/>
</dbReference>
<dbReference type="InterPro" id="IPR009072">
    <property type="entry name" value="Histone-fold"/>
</dbReference>
<dbReference type="InterPro" id="IPR001951">
    <property type="entry name" value="Histone_H4"/>
</dbReference>
<dbReference type="InterPro" id="IPR019809">
    <property type="entry name" value="Histone_H4_CS"/>
</dbReference>
<dbReference type="PANTHER" id="PTHR10484">
    <property type="entry name" value="HISTONE H4"/>
    <property type="match status" value="1"/>
</dbReference>
<dbReference type="Pfam" id="PF15511">
    <property type="entry name" value="CENP-T_C"/>
    <property type="match status" value="1"/>
</dbReference>
<dbReference type="PRINTS" id="PR00623">
    <property type="entry name" value="HISTONEH4"/>
</dbReference>
<dbReference type="SMART" id="SM00417">
    <property type="entry name" value="H4"/>
    <property type="match status" value="1"/>
</dbReference>
<dbReference type="SUPFAM" id="SSF47113">
    <property type="entry name" value="Histone-fold"/>
    <property type="match status" value="1"/>
</dbReference>
<dbReference type="PROSITE" id="PS00047">
    <property type="entry name" value="HISTONE_H4"/>
    <property type="match status" value="1"/>
</dbReference>
<proteinExistence type="inferred from homology"/>
<feature type="initiator methionine" description="Removed" evidence="1">
    <location>
        <position position="1"/>
    </location>
</feature>
<feature type="chain" id="PRO_0000158301" description="Histone H4">
    <location>
        <begin position="2"/>
        <end position="103"/>
    </location>
</feature>
<feature type="DNA-binding region">
    <location>
        <begin position="17"/>
        <end position="21"/>
    </location>
</feature>
<feature type="region of interest" description="Disordered" evidence="3">
    <location>
        <begin position="1"/>
        <end position="20"/>
    </location>
</feature>
<feature type="compositionally biased region" description="Gly residues" evidence="3">
    <location>
        <begin position="1"/>
        <end position="14"/>
    </location>
</feature>
<feature type="modified residue" description="N6-acetyl-N6-methyllysine; alternate" evidence="2">
    <location>
        <position position="6"/>
    </location>
</feature>
<feature type="modified residue" description="N6-acetyl-N6-methyllysine; alternate" evidence="2">
    <location>
        <position position="13"/>
    </location>
</feature>
<name>H4_DIAPU</name>
<evidence type="ECO:0000250" key="1"/>
<evidence type="ECO:0000250" key="2">
    <source>
        <dbReference type="UniProtKB" id="P62805"/>
    </source>
</evidence>
<evidence type="ECO:0000256" key="3">
    <source>
        <dbReference type="SAM" id="MobiDB-lite"/>
    </source>
</evidence>
<evidence type="ECO:0000305" key="4"/>
<comment type="function">
    <text>Core component of nucleosome. Nucleosomes wrap and compact DNA into chromatin, limiting DNA accessibility to the cellular machineries which require DNA as a template. Histones thereby play a central role in transcription regulation, DNA repair, DNA replication and chromosomal stability. DNA accessibility is regulated via a complex set of post-translational modifications of histones, also called histone code, and nucleosome remodeling.</text>
</comment>
<comment type="subunit">
    <text>The nucleosome is a histone octamer containing two molecules each of H2A, H2B, H3 and H4 assembled in one H3-H4 heterotetramer and two H2A-H2B heterodimers. The octamer wraps approximately 147 bp of DNA.</text>
</comment>
<comment type="subcellular location">
    <subcellularLocation>
        <location evidence="1">Nucleus</location>
    </subcellularLocation>
    <subcellularLocation>
        <location evidence="1">Chromosome</location>
    </subcellularLocation>
</comment>
<comment type="similarity">
    <text evidence="4">Belongs to the histone H4 family.</text>
</comment>
<organism>
    <name type="scientific">Diadromus pulchellus</name>
    <name type="common">Parasitic wasp</name>
    <dbReference type="NCBI Taxonomy" id="7420"/>
    <lineage>
        <taxon>Eukaryota</taxon>
        <taxon>Metazoa</taxon>
        <taxon>Ecdysozoa</taxon>
        <taxon>Arthropoda</taxon>
        <taxon>Hexapoda</taxon>
        <taxon>Insecta</taxon>
        <taxon>Pterygota</taxon>
        <taxon>Neoptera</taxon>
        <taxon>Endopterygota</taxon>
        <taxon>Hymenoptera</taxon>
        <taxon>Apocrita</taxon>
        <taxon>Ichneumonoidea</taxon>
        <taxon>Ichneumonidae</taxon>
        <taxon>Ichneumoninae</taxon>
        <taxon>Diadromus</taxon>
    </lineage>
</organism>
<protein>
    <recommendedName>
        <fullName>Histone H4</fullName>
    </recommendedName>
</protein>
<accession>P91882</accession>
<reference key="1">
    <citation type="submission" date="1995-09" db="EMBL/GenBank/DDBJ databases">
        <title>Fast cloning and sequencing of histone H4 and actin messenger RNA fragments and their uses as control.</title>
        <authorList>
            <person name="Hamelin E."/>
            <person name="Bigot Y.Y.B."/>
            <person name="Rouleux F."/>
            <person name="Renault S."/>
            <person name="Periquet G."/>
        </authorList>
    </citation>
    <scope>NUCLEOTIDE SEQUENCE [MRNA]</scope>
</reference>